<accession>A4G0D4</accession>
<reference key="1">
    <citation type="submission" date="2007-03" db="EMBL/GenBank/DDBJ databases">
        <title>Complete sequence of chromosome of Methanococcus maripaludis C5.</title>
        <authorList>
            <consortium name="US DOE Joint Genome Institute"/>
            <person name="Copeland A."/>
            <person name="Lucas S."/>
            <person name="Lapidus A."/>
            <person name="Barry K."/>
            <person name="Glavina del Rio T."/>
            <person name="Dalin E."/>
            <person name="Tice H."/>
            <person name="Pitluck S."/>
            <person name="Chertkov O."/>
            <person name="Brettin T."/>
            <person name="Bruce D."/>
            <person name="Han C."/>
            <person name="Detter J.C."/>
            <person name="Schmutz J."/>
            <person name="Larimer F."/>
            <person name="Land M."/>
            <person name="Hauser L."/>
            <person name="Kyrpides N."/>
            <person name="Mikhailova N."/>
            <person name="Sieprawska-Lupa M."/>
            <person name="Whitman W.B."/>
            <person name="Richardson P."/>
        </authorList>
    </citation>
    <scope>NUCLEOTIDE SEQUENCE [LARGE SCALE GENOMIC DNA]</scope>
    <source>
        <strain>C5 / ATCC BAA-1333</strain>
    </source>
</reference>
<evidence type="ECO:0000255" key="1">
    <source>
        <dbReference type="HAMAP-Rule" id="MF_01612"/>
    </source>
</evidence>
<evidence type="ECO:0000255" key="2">
    <source>
        <dbReference type="PROSITE-ProRule" id="PRU01266"/>
    </source>
</evidence>
<organism>
    <name type="scientific">Methanococcus maripaludis (strain C5 / ATCC BAA-1333)</name>
    <dbReference type="NCBI Taxonomy" id="402880"/>
    <lineage>
        <taxon>Archaea</taxon>
        <taxon>Methanobacteriati</taxon>
        <taxon>Methanobacteriota</taxon>
        <taxon>Methanomada group</taxon>
        <taxon>Methanococci</taxon>
        <taxon>Methanococcales</taxon>
        <taxon>Methanococcaceae</taxon>
        <taxon>Methanococcus</taxon>
    </lineage>
</organism>
<proteinExistence type="inferred from homology"/>
<feature type="chain" id="PRO_1000069452" description="5-amino-6-(D-ribitylamino)uracil--L-tyrosine 4-hydroxyphenyl transferase">
    <location>
        <begin position="1"/>
        <end position="359"/>
    </location>
</feature>
<feature type="domain" description="Radical SAM core" evidence="2">
    <location>
        <begin position="45"/>
        <end position="282"/>
    </location>
</feature>
<feature type="binding site" evidence="1">
    <location>
        <position position="59"/>
    </location>
    <ligand>
        <name>[4Fe-4S] cluster</name>
        <dbReference type="ChEBI" id="CHEBI:49883"/>
        <note>4Fe-4S-S-AdoMet</note>
    </ligand>
</feature>
<feature type="binding site" evidence="1">
    <location>
        <position position="63"/>
    </location>
    <ligand>
        <name>[4Fe-4S] cluster</name>
        <dbReference type="ChEBI" id="CHEBI:49883"/>
        <note>4Fe-4S-S-AdoMet</note>
    </ligand>
</feature>
<feature type="binding site" evidence="1">
    <location>
        <position position="66"/>
    </location>
    <ligand>
        <name>[4Fe-4S] cluster</name>
        <dbReference type="ChEBI" id="CHEBI:49883"/>
        <note>4Fe-4S-S-AdoMet</note>
    </ligand>
</feature>
<gene>
    <name evidence="1" type="primary">cofH</name>
    <name type="ordered locus">MmarC5_1621</name>
</gene>
<keyword id="KW-0004">4Fe-4S</keyword>
<keyword id="KW-0408">Iron</keyword>
<keyword id="KW-0411">Iron-sulfur</keyword>
<keyword id="KW-0479">Metal-binding</keyword>
<keyword id="KW-0949">S-adenosyl-L-methionine</keyword>
<keyword id="KW-0808">Transferase</keyword>
<sequence>MDLMSFKEKEISKKDCLELFEDTENFFDVIKLADSIRKDIVGDTVTYVVNANINFTNVCSGTCKFCAFKAEHGDPNAFFLNPDEVAKKALEARKIGATEVCIQGGLLKEIDTYFQAEILKKVKKITEPYEEIVVHAFSPMEVKSAAENAGLSVNEALKILKENGLNSMPGTAAEILNDEIRSEICPTKLKTSEWIDVVTNAHKTGIKTTCTMMYGHIEENKHLAEHLSILRKIQKETGGFTEFVPLTFLHENAPLHHMERVKSGASGMLDLKTYAISRIFFKDYIKNIQTSWVKLGTKLSQVSLNCGANDIGGTLMEESISKAAGGSYGTFMSEEKLKDMILAVGRIPKQRNTAYEIIE</sequence>
<dbReference type="EC" id="2.5.1.147" evidence="1"/>
<dbReference type="EMBL" id="CP000609">
    <property type="protein sequence ID" value="ABO35918.1"/>
    <property type="molecule type" value="Genomic_DNA"/>
</dbReference>
<dbReference type="RefSeq" id="WP_011869365.1">
    <property type="nucleotide sequence ID" value="NC_009135.1"/>
</dbReference>
<dbReference type="SMR" id="A4G0D4"/>
<dbReference type="STRING" id="402880.MmarC5_1621"/>
<dbReference type="GeneID" id="4928343"/>
<dbReference type="KEGG" id="mmq:MmarC5_1621"/>
<dbReference type="eggNOG" id="arCOG00656">
    <property type="taxonomic scope" value="Archaea"/>
</dbReference>
<dbReference type="HOGENOM" id="CLU_040406_1_0_2"/>
<dbReference type="OrthoDB" id="8186at2157"/>
<dbReference type="UniPathway" id="UPA00072"/>
<dbReference type="Proteomes" id="UP000000253">
    <property type="component" value="Chromosome"/>
</dbReference>
<dbReference type="GO" id="GO:0051539">
    <property type="term" value="F:4 iron, 4 sulfur cluster binding"/>
    <property type="evidence" value="ECO:0007669"/>
    <property type="project" value="UniProtKB-KW"/>
</dbReference>
<dbReference type="GO" id="GO:0141093">
    <property type="term" value="F:5-amino-6-(D-ribitylamino)uracil--L-tyrosine 4-hydroxyphenyl transferase activity"/>
    <property type="evidence" value="ECO:0007669"/>
    <property type="project" value="UniProtKB-EC"/>
</dbReference>
<dbReference type="GO" id="GO:0044689">
    <property type="term" value="F:7,8-didemethyl-8-hydroxy-5-deazariboflavin synthase activity"/>
    <property type="evidence" value="ECO:0007669"/>
    <property type="project" value="TreeGrafter"/>
</dbReference>
<dbReference type="GO" id="GO:0005506">
    <property type="term" value="F:iron ion binding"/>
    <property type="evidence" value="ECO:0007669"/>
    <property type="project" value="UniProtKB-UniRule"/>
</dbReference>
<dbReference type="CDD" id="cd01335">
    <property type="entry name" value="Radical_SAM"/>
    <property type="match status" value="1"/>
</dbReference>
<dbReference type="FunFam" id="3.20.20.70:FF:000134">
    <property type="entry name" value="7,8-didemethyl-8-hydroxy-5-deazariboflavin synthase"/>
    <property type="match status" value="1"/>
</dbReference>
<dbReference type="Gene3D" id="3.20.20.70">
    <property type="entry name" value="Aldolase class I"/>
    <property type="match status" value="1"/>
</dbReference>
<dbReference type="HAMAP" id="MF_01612">
    <property type="entry name" value="FO_synth_sub2"/>
    <property type="match status" value="1"/>
</dbReference>
<dbReference type="InterPro" id="IPR013785">
    <property type="entry name" value="Aldolase_TIM"/>
</dbReference>
<dbReference type="InterPro" id="IPR045567">
    <property type="entry name" value="CofH/MnqC-like_C"/>
</dbReference>
<dbReference type="InterPro" id="IPR019940">
    <property type="entry name" value="CofH_family"/>
</dbReference>
<dbReference type="InterPro" id="IPR006638">
    <property type="entry name" value="Elp3/MiaA/NifB-like_rSAM"/>
</dbReference>
<dbReference type="InterPro" id="IPR034405">
    <property type="entry name" value="F420"/>
</dbReference>
<dbReference type="InterPro" id="IPR020050">
    <property type="entry name" value="FO_synthase_su2"/>
</dbReference>
<dbReference type="InterPro" id="IPR007197">
    <property type="entry name" value="rSAM"/>
</dbReference>
<dbReference type="NCBIfam" id="TIGR00423">
    <property type="entry name" value="CofH family radical SAM protein"/>
    <property type="match status" value="1"/>
</dbReference>
<dbReference type="NCBIfam" id="TIGR03551">
    <property type="entry name" value="F420_cofH"/>
    <property type="match status" value="1"/>
</dbReference>
<dbReference type="NCBIfam" id="NF005609">
    <property type="entry name" value="PRK07360.1"/>
    <property type="match status" value="1"/>
</dbReference>
<dbReference type="PANTHER" id="PTHR43076">
    <property type="entry name" value="FO SYNTHASE (COFH)"/>
    <property type="match status" value="1"/>
</dbReference>
<dbReference type="PANTHER" id="PTHR43076:SF1">
    <property type="entry name" value="LIPOYL SYNTHASE 2"/>
    <property type="match status" value="1"/>
</dbReference>
<dbReference type="Pfam" id="PF19288">
    <property type="entry name" value="CofH_C"/>
    <property type="match status" value="1"/>
</dbReference>
<dbReference type="Pfam" id="PF04055">
    <property type="entry name" value="Radical_SAM"/>
    <property type="match status" value="1"/>
</dbReference>
<dbReference type="PIRSF" id="PIRSF004762">
    <property type="entry name" value="CHP00423"/>
    <property type="match status" value="1"/>
</dbReference>
<dbReference type="SFLD" id="SFLDF00293">
    <property type="entry name" value="((2_3_4_5-tetrahydroxypentyl)a"/>
    <property type="match status" value="1"/>
</dbReference>
<dbReference type="SFLD" id="SFLDF00343">
    <property type="entry name" value="aminofutalosine_synthase_(mqnE"/>
    <property type="match status" value="1"/>
</dbReference>
<dbReference type="SFLD" id="SFLDS00029">
    <property type="entry name" value="Radical_SAM"/>
    <property type="match status" value="1"/>
</dbReference>
<dbReference type="SMART" id="SM00729">
    <property type="entry name" value="Elp3"/>
    <property type="match status" value="1"/>
</dbReference>
<dbReference type="SUPFAM" id="SSF102114">
    <property type="entry name" value="Radical SAM enzymes"/>
    <property type="match status" value="1"/>
</dbReference>
<dbReference type="PROSITE" id="PS51918">
    <property type="entry name" value="RADICAL_SAM"/>
    <property type="match status" value="1"/>
</dbReference>
<name>COFH_METM5</name>
<comment type="function">
    <text evidence="1">Catalyzes the radical-mediated synthesis of 5-amino-5-(4-hydroxybenzyl)-6-(D-ribitylimino)-5,6-dihydrouracil from 5-amino-6-(D-ribitylamino)uracil and L-tyrosine.</text>
</comment>
<comment type="catalytic activity">
    <reaction evidence="1">
        <text>5-amino-6-(D-ribitylamino)uracil + L-tyrosine + S-adenosyl-L-methionine = 5-amino-5-(4-hydroxybenzyl)-6-(D-ribitylimino)-5,6-dihydrouracil + 2-iminoacetate + 5'-deoxyadenosine + L-methionine + H(+)</text>
        <dbReference type="Rhea" id="RHEA:55200"/>
        <dbReference type="ChEBI" id="CHEBI:15378"/>
        <dbReference type="ChEBI" id="CHEBI:15934"/>
        <dbReference type="ChEBI" id="CHEBI:17319"/>
        <dbReference type="ChEBI" id="CHEBI:57844"/>
        <dbReference type="ChEBI" id="CHEBI:58315"/>
        <dbReference type="ChEBI" id="CHEBI:59789"/>
        <dbReference type="ChEBI" id="CHEBI:77846"/>
        <dbReference type="ChEBI" id="CHEBI:85936"/>
        <dbReference type="EC" id="2.5.1.147"/>
    </reaction>
</comment>
<comment type="cofactor">
    <cofactor evidence="1">
        <name>[4Fe-4S] cluster</name>
        <dbReference type="ChEBI" id="CHEBI:49883"/>
    </cofactor>
    <text evidence="1">Binds 1 [4Fe-4S] cluster. The cluster is coordinated with 3 cysteines and an exchangeable S-adenosyl-L-methionine.</text>
</comment>
<comment type="pathway">
    <text evidence="1">Cofactor biosynthesis; coenzyme F0 biosynthesis.</text>
</comment>
<comment type="subunit">
    <text evidence="1">Consists of two subunits, CofG and CofH.</text>
</comment>
<comment type="similarity">
    <text evidence="1">Belongs to the radical SAM superfamily. CofH family.</text>
</comment>
<protein>
    <recommendedName>
        <fullName evidence="1">5-amino-6-(D-ribitylamino)uracil--L-tyrosine 4-hydroxyphenyl transferase</fullName>
        <ecNumber evidence="1">2.5.1.147</ecNumber>
    </recommendedName>
    <alternativeName>
        <fullName evidence="1">FO synthase subunit 2</fullName>
    </alternativeName>
</protein>